<accession>A1BJT9</accession>
<name>RF1_CHLPD</name>
<reference key="1">
    <citation type="submission" date="2006-12" db="EMBL/GenBank/DDBJ databases">
        <title>Complete sequence of Chlorobium phaeobacteroides DSM 266.</title>
        <authorList>
            <consortium name="US DOE Joint Genome Institute"/>
            <person name="Copeland A."/>
            <person name="Lucas S."/>
            <person name="Lapidus A."/>
            <person name="Barry K."/>
            <person name="Detter J.C."/>
            <person name="Glavina del Rio T."/>
            <person name="Hammon N."/>
            <person name="Israni S."/>
            <person name="Pitluck S."/>
            <person name="Goltsman E."/>
            <person name="Schmutz J."/>
            <person name="Larimer F."/>
            <person name="Land M."/>
            <person name="Hauser L."/>
            <person name="Mikhailova N."/>
            <person name="Li T."/>
            <person name="Overmann J."/>
            <person name="Bryant D.A."/>
            <person name="Richardson P."/>
        </authorList>
    </citation>
    <scope>NUCLEOTIDE SEQUENCE [LARGE SCALE GENOMIC DNA]</scope>
    <source>
        <strain>DSM 266 / SMG 266 / 2430</strain>
    </source>
</reference>
<dbReference type="EMBL" id="CP000492">
    <property type="protein sequence ID" value="ABL66666.1"/>
    <property type="molecule type" value="Genomic_DNA"/>
</dbReference>
<dbReference type="RefSeq" id="WP_015961193.1">
    <property type="nucleotide sequence ID" value="NC_008639.1"/>
</dbReference>
<dbReference type="SMR" id="A1BJT9"/>
<dbReference type="STRING" id="290317.Cpha266_2682"/>
<dbReference type="KEGG" id="cph:Cpha266_2682"/>
<dbReference type="eggNOG" id="COG0216">
    <property type="taxonomic scope" value="Bacteria"/>
</dbReference>
<dbReference type="HOGENOM" id="CLU_036856_0_1_10"/>
<dbReference type="OrthoDB" id="9806673at2"/>
<dbReference type="Proteomes" id="UP000008701">
    <property type="component" value="Chromosome"/>
</dbReference>
<dbReference type="GO" id="GO:0005737">
    <property type="term" value="C:cytoplasm"/>
    <property type="evidence" value="ECO:0007669"/>
    <property type="project" value="UniProtKB-SubCell"/>
</dbReference>
<dbReference type="GO" id="GO:0016149">
    <property type="term" value="F:translation release factor activity, codon specific"/>
    <property type="evidence" value="ECO:0007669"/>
    <property type="project" value="UniProtKB-UniRule"/>
</dbReference>
<dbReference type="FunFam" id="3.30.160.20:FF:000004">
    <property type="entry name" value="Peptide chain release factor 1"/>
    <property type="match status" value="1"/>
</dbReference>
<dbReference type="FunFam" id="3.30.70.1660:FF:000002">
    <property type="entry name" value="Peptide chain release factor 1"/>
    <property type="match status" value="1"/>
</dbReference>
<dbReference type="Gene3D" id="3.30.160.20">
    <property type="match status" value="1"/>
</dbReference>
<dbReference type="Gene3D" id="3.30.70.1660">
    <property type="match status" value="1"/>
</dbReference>
<dbReference type="Gene3D" id="6.10.140.1950">
    <property type="match status" value="1"/>
</dbReference>
<dbReference type="HAMAP" id="MF_00093">
    <property type="entry name" value="Rel_fac_1"/>
    <property type="match status" value="1"/>
</dbReference>
<dbReference type="InterPro" id="IPR005139">
    <property type="entry name" value="PCRF"/>
</dbReference>
<dbReference type="InterPro" id="IPR000352">
    <property type="entry name" value="Pep_chain_release_fac_I"/>
</dbReference>
<dbReference type="InterPro" id="IPR045853">
    <property type="entry name" value="Pep_chain_release_fac_I_sf"/>
</dbReference>
<dbReference type="InterPro" id="IPR050057">
    <property type="entry name" value="Prokaryotic/Mito_RF"/>
</dbReference>
<dbReference type="InterPro" id="IPR004373">
    <property type="entry name" value="RF-1"/>
</dbReference>
<dbReference type="NCBIfam" id="TIGR00019">
    <property type="entry name" value="prfA"/>
    <property type="match status" value="1"/>
</dbReference>
<dbReference type="NCBIfam" id="NF001859">
    <property type="entry name" value="PRK00591.1"/>
    <property type="match status" value="1"/>
</dbReference>
<dbReference type="PANTHER" id="PTHR43804">
    <property type="entry name" value="LD18447P"/>
    <property type="match status" value="1"/>
</dbReference>
<dbReference type="PANTHER" id="PTHR43804:SF7">
    <property type="entry name" value="LD18447P"/>
    <property type="match status" value="1"/>
</dbReference>
<dbReference type="Pfam" id="PF03462">
    <property type="entry name" value="PCRF"/>
    <property type="match status" value="1"/>
</dbReference>
<dbReference type="Pfam" id="PF00472">
    <property type="entry name" value="RF-1"/>
    <property type="match status" value="1"/>
</dbReference>
<dbReference type="SMART" id="SM00937">
    <property type="entry name" value="PCRF"/>
    <property type="match status" value="1"/>
</dbReference>
<dbReference type="SUPFAM" id="SSF75620">
    <property type="entry name" value="Release factor"/>
    <property type="match status" value="1"/>
</dbReference>
<dbReference type="PROSITE" id="PS00745">
    <property type="entry name" value="RF_PROK_I"/>
    <property type="match status" value="1"/>
</dbReference>
<proteinExistence type="inferred from homology"/>
<protein>
    <recommendedName>
        <fullName evidence="1">Peptide chain release factor 1</fullName>
        <shortName evidence="1">RF-1</shortName>
    </recommendedName>
</protein>
<feature type="chain" id="PRO_1000004877" description="Peptide chain release factor 1">
    <location>
        <begin position="1"/>
        <end position="357"/>
    </location>
</feature>
<feature type="modified residue" description="N5-methylglutamine" evidence="1">
    <location>
        <position position="234"/>
    </location>
</feature>
<keyword id="KW-0963">Cytoplasm</keyword>
<keyword id="KW-0488">Methylation</keyword>
<keyword id="KW-0648">Protein biosynthesis</keyword>
<keyword id="KW-1185">Reference proteome</keyword>
<evidence type="ECO:0000255" key="1">
    <source>
        <dbReference type="HAMAP-Rule" id="MF_00093"/>
    </source>
</evidence>
<comment type="function">
    <text evidence="1">Peptide chain release factor 1 directs the termination of translation in response to the peptide chain termination codons UAG and UAA.</text>
</comment>
<comment type="subcellular location">
    <subcellularLocation>
        <location evidence="1">Cytoplasm</location>
    </subcellularLocation>
</comment>
<comment type="PTM">
    <text evidence="1">Methylated by PrmC. Methylation increases the termination efficiency of RF1.</text>
</comment>
<comment type="similarity">
    <text evidence="1">Belongs to the prokaryotic/mitochondrial release factor family.</text>
</comment>
<sequence length="357" mass="40999">MFDKLQAIKEKHEDLEQQLLDPHAAEDQNRFRKLNKEYRDLCSIVEAYDRYALAKKQLEESRLLLKNEKEQDMRAMVQDEISSLQESILEREKQLKLLLLPKDEVDSRNVIIEIRAGTGGEEAALFAADLVRMYQRFAEQQGWKYEVLDFNESSVPGGFREIVLGVSGHDVYGTMKYESGVHRVQRVPDTETQGRIHTSAASVAVLPEAEEVDVEIRKDDLRFDTYRSGGKGGQNVNKVETAVRITHQPSGIVVACQEERSQLQNKERAMKMLRAKLYDRQLAEQQEKRAGLRRSMVTTGDRSAKIRTYNYPQSRVTDHRIGFTSHALPQIMQGDIKDIIEALKMHDQAERLQAELV</sequence>
<organism>
    <name type="scientific">Chlorobium phaeobacteroides (strain DSM 266 / SMG 266 / 2430)</name>
    <dbReference type="NCBI Taxonomy" id="290317"/>
    <lineage>
        <taxon>Bacteria</taxon>
        <taxon>Pseudomonadati</taxon>
        <taxon>Chlorobiota</taxon>
        <taxon>Chlorobiia</taxon>
        <taxon>Chlorobiales</taxon>
        <taxon>Chlorobiaceae</taxon>
        <taxon>Chlorobium/Pelodictyon group</taxon>
        <taxon>Chlorobium</taxon>
    </lineage>
</organism>
<gene>
    <name evidence="1" type="primary">prfA</name>
    <name type="ordered locus">Cpha266_2682</name>
</gene>